<evidence type="ECO:0000250" key="1"/>
<evidence type="ECO:0000255" key="2">
    <source>
        <dbReference type="PROSITE-ProRule" id="PRU00160"/>
    </source>
</evidence>
<evidence type="ECO:0000255" key="3">
    <source>
        <dbReference type="PROSITE-ProRule" id="PRU10044"/>
    </source>
</evidence>
<evidence type="ECO:0000305" key="4"/>
<gene>
    <name type="primary">STY-22</name>
</gene>
<organism>
    <name type="scientific">Styela plicata</name>
    <name type="common">Wrinkled sea squirt</name>
    <name type="synonym">Ascidia plicata</name>
    <dbReference type="NCBI Taxonomy" id="7726"/>
    <lineage>
        <taxon>Eukaryota</taxon>
        <taxon>Metazoa</taxon>
        <taxon>Chordata</taxon>
        <taxon>Tunicata</taxon>
        <taxon>Ascidiacea</taxon>
        <taxon>Stolidobranchia</taxon>
        <taxon>Styelidae</taxon>
        <taxon>Styela</taxon>
    </lineage>
</organism>
<reference key="1">
    <citation type="journal article" date="1991" name="Immunogenetics">
        <title>Protein tyrosine phosphatase domains from the protochordate Styela plicata.</title>
        <authorList>
            <person name="Matthews R.J."/>
            <person name="Flores E."/>
            <person name="Thomas M.L."/>
        </authorList>
    </citation>
    <scope>NUCLEOTIDE SEQUENCE [MRNA]</scope>
</reference>
<protein>
    <recommendedName>
        <fullName>Tyrosine-protein phosphatase 22</fullName>
        <ecNumber>3.1.3.48</ecNumber>
    </recommendedName>
</protein>
<sequence>WLMIVEQKCRVIVMLAKCFEAGKKKCQKYWPDSKETKTFGRVKVFNVEEVKYCGFLRRRFHIESVDEVITMEVFQYQYINWPDHSVPNTTSNLVRMHKYVIQCLEETGGDAPMVV</sequence>
<dbReference type="EC" id="3.1.3.48"/>
<dbReference type="EMBL" id="M38007">
    <property type="protein sequence ID" value="AAA29840.1"/>
    <property type="molecule type" value="mRNA"/>
</dbReference>
<dbReference type="SMR" id="P28214"/>
<dbReference type="GO" id="GO:0004725">
    <property type="term" value="F:protein tyrosine phosphatase activity"/>
    <property type="evidence" value="ECO:0007669"/>
    <property type="project" value="UniProtKB-EC"/>
</dbReference>
<dbReference type="CDD" id="cd00047">
    <property type="entry name" value="PTPc"/>
    <property type="match status" value="1"/>
</dbReference>
<dbReference type="Gene3D" id="3.90.190.10">
    <property type="entry name" value="Protein tyrosine phosphatase superfamily"/>
    <property type="match status" value="1"/>
</dbReference>
<dbReference type="InterPro" id="IPR029021">
    <property type="entry name" value="Prot-tyrosine_phosphatase-like"/>
</dbReference>
<dbReference type="InterPro" id="IPR050348">
    <property type="entry name" value="Protein-Tyr_Phosphatase"/>
</dbReference>
<dbReference type="InterPro" id="IPR000242">
    <property type="entry name" value="PTP_cat"/>
</dbReference>
<dbReference type="PANTHER" id="PTHR19134:SF562">
    <property type="entry name" value="PROTEIN-TYROSINE-PHOSPHATASE"/>
    <property type="match status" value="1"/>
</dbReference>
<dbReference type="PANTHER" id="PTHR19134">
    <property type="entry name" value="RECEPTOR-TYPE TYROSINE-PROTEIN PHOSPHATASE"/>
    <property type="match status" value="1"/>
</dbReference>
<dbReference type="Pfam" id="PF00102">
    <property type="entry name" value="Y_phosphatase"/>
    <property type="match status" value="1"/>
</dbReference>
<dbReference type="SUPFAM" id="SSF52799">
    <property type="entry name" value="(Phosphotyrosine protein) phosphatases II"/>
    <property type="match status" value="1"/>
</dbReference>
<dbReference type="PROSITE" id="PS50055">
    <property type="entry name" value="TYR_PHOSPHATASE_PTP"/>
    <property type="match status" value="1"/>
</dbReference>
<feature type="chain" id="PRO_0000094910" description="Tyrosine-protein phosphatase 22">
    <location>
        <begin position="1" status="less than"/>
        <end position="115" status="greater than"/>
    </location>
</feature>
<feature type="domain" description="Tyrosine-protein phosphatase" evidence="2">
    <location>
        <begin position="1" status="less than"/>
        <end position="115" status="greater than"/>
    </location>
</feature>
<feature type="binding site" evidence="1">
    <location>
        <position position="83"/>
    </location>
    <ligand>
        <name>substrate</name>
    </ligand>
</feature>
<feature type="non-terminal residue">
    <location>
        <position position="1"/>
    </location>
</feature>
<feature type="non-terminal residue">
    <location>
        <position position="115"/>
    </location>
</feature>
<accession>P28214</accession>
<name>PTP22_STYPL</name>
<proteinExistence type="evidence at transcript level"/>
<comment type="catalytic activity">
    <reaction evidence="3">
        <text>O-phospho-L-tyrosyl-[protein] + H2O = L-tyrosyl-[protein] + phosphate</text>
        <dbReference type="Rhea" id="RHEA:10684"/>
        <dbReference type="Rhea" id="RHEA-COMP:10136"/>
        <dbReference type="Rhea" id="RHEA-COMP:20101"/>
        <dbReference type="ChEBI" id="CHEBI:15377"/>
        <dbReference type="ChEBI" id="CHEBI:43474"/>
        <dbReference type="ChEBI" id="CHEBI:46858"/>
        <dbReference type="ChEBI" id="CHEBI:61978"/>
        <dbReference type="EC" id="3.1.3.48"/>
    </reaction>
</comment>
<comment type="similarity">
    <text evidence="4">Belongs to the protein-tyrosine phosphatase family.</text>
</comment>
<keyword id="KW-0378">Hydrolase</keyword>
<keyword id="KW-0904">Protein phosphatase</keyword>